<gene>
    <name type="primary">ctxn2</name>
    <name type="ORF">wu:fj35c01</name>
</gene>
<dbReference type="EMBL" id="AY581204">
    <property type="protein sequence ID" value="AAS76478.1"/>
    <property type="molecule type" value="Genomic_DNA"/>
</dbReference>
<dbReference type="RefSeq" id="NP_001189362.1">
    <property type="nucleotide sequence ID" value="NM_001202433.1"/>
</dbReference>
<dbReference type="RefSeq" id="XP_005173676.1">
    <property type="nucleotide sequence ID" value="XM_005173619.3"/>
</dbReference>
<dbReference type="SMR" id="Q592E4"/>
<dbReference type="FunCoup" id="Q592E4">
    <property type="interactions" value="1101"/>
</dbReference>
<dbReference type="GeneID" id="556348"/>
<dbReference type="KEGG" id="dre:556348"/>
<dbReference type="CTD" id="399697"/>
<dbReference type="HOGENOM" id="CLU_193122_0_0_1"/>
<dbReference type="InParanoid" id="Q592E4"/>
<dbReference type="OrthoDB" id="9947540at2759"/>
<dbReference type="PhylomeDB" id="Q592E4"/>
<dbReference type="PRO" id="PR:Q592E4"/>
<dbReference type="Proteomes" id="UP000000437">
    <property type="component" value="Chromosome 18"/>
</dbReference>
<dbReference type="GO" id="GO:0016020">
    <property type="term" value="C:membrane"/>
    <property type="evidence" value="ECO:0007669"/>
    <property type="project" value="UniProtKB-SubCell"/>
</dbReference>
<dbReference type="InterPro" id="IPR020066">
    <property type="entry name" value="Cortexin"/>
</dbReference>
<dbReference type="PANTHER" id="PTHR16736">
    <property type="entry name" value="CORTEXIN-1-RELATED"/>
    <property type="match status" value="1"/>
</dbReference>
<dbReference type="PANTHER" id="PTHR16736:SF2">
    <property type="entry name" value="CORTEXIN-2"/>
    <property type="match status" value="1"/>
</dbReference>
<dbReference type="Pfam" id="PF11057">
    <property type="entry name" value="Cortexin"/>
    <property type="match status" value="1"/>
</dbReference>
<reference key="1">
    <citation type="journal article" date="2005" name="Science">
        <title>SLC24A5, a putative cation exchanger, affects pigmentation in zebrafish and humans.</title>
        <authorList>
            <person name="Lamason R.L."/>
            <person name="Mohideen M.-A.P.K."/>
            <person name="Mest J.R."/>
            <person name="Wong A.C."/>
            <person name="Norton H.L."/>
            <person name="Aros M.C."/>
            <person name="Jurynec M.J."/>
            <person name="Mao X."/>
            <person name="Humphreville V.R."/>
            <person name="Humbert J.E."/>
            <person name="Sinha S."/>
            <person name="Moore J.L."/>
            <person name="Jagadeeswaran P."/>
            <person name="Zhao W."/>
            <person name="Ning G."/>
            <person name="Makalowska I."/>
            <person name="McKeigue P.M."/>
            <person name="O'Donnell D."/>
            <person name="Kittles R."/>
            <person name="Parra E.J."/>
            <person name="Mangini N.J."/>
            <person name="Grunwald D.J."/>
            <person name="Shriver M.D."/>
            <person name="Canfield V.A."/>
            <person name="Cheng K.C."/>
        </authorList>
    </citation>
    <scope>NUCLEOTIDE SEQUENCE [MRNA]</scope>
</reference>
<name>CTXN2_DANRE</name>
<evidence type="ECO:0000255" key="1"/>
<evidence type="ECO:0000305" key="2"/>
<organism>
    <name type="scientific">Danio rerio</name>
    <name type="common">Zebrafish</name>
    <name type="synonym">Brachydanio rerio</name>
    <dbReference type="NCBI Taxonomy" id="7955"/>
    <lineage>
        <taxon>Eukaryota</taxon>
        <taxon>Metazoa</taxon>
        <taxon>Chordata</taxon>
        <taxon>Craniata</taxon>
        <taxon>Vertebrata</taxon>
        <taxon>Euteleostomi</taxon>
        <taxon>Actinopterygii</taxon>
        <taxon>Neopterygii</taxon>
        <taxon>Teleostei</taxon>
        <taxon>Ostariophysi</taxon>
        <taxon>Cypriniformes</taxon>
        <taxon>Danionidae</taxon>
        <taxon>Danioninae</taxon>
        <taxon>Danio</taxon>
    </lineage>
</organism>
<keyword id="KW-0472">Membrane</keyword>
<keyword id="KW-1185">Reference proteome</keyword>
<keyword id="KW-0812">Transmembrane</keyword>
<keyword id="KW-1133">Transmembrane helix</keyword>
<sequence>MCSVHYNHSLAAMSGSDIMAYSLSLEQKTAFAFVGMLLVFLGLLIVRCFRILLDPYSSMPSSSWGDGLEGLEKGTFEYALT</sequence>
<comment type="subcellular location">
    <subcellularLocation>
        <location evidence="2">Membrane</location>
        <topology evidence="2">Single-pass membrane protein</topology>
    </subcellularLocation>
</comment>
<comment type="similarity">
    <text evidence="2">Belongs to the cortexin family.</text>
</comment>
<protein>
    <recommendedName>
        <fullName>Cortexin-2</fullName>
    </recommendedName>
</protein>
<proteinExistence type="inferred from homology"/>
<accession>Q592E4</accession>
<feature type="chain" id="PRO_0000284618" description="Cortexin-2">
    <location>
        <begin position="1"/>
        <end position="81"/>
    </location>
</feature>
<feature type="transmembrane region" description="Helical" evidence="1">
    <location>
        <begin position="29"/>
        <end position="49"/>
    </location>
</feature>